<evidence type="ECO:0000255" key="1">
    <source>
        <dbReference type="PROSITE-ProRule" id="PRU01088"/>
    </source>
</evidence>
<evidence type="ECO:0000256" key="2">
    <source>
        <dbReference type="SAM" id="MobiDB-lite"/>
    </source>
</evidence>
<evidence type="ECO:0000269" key="3">
    <source>
    </source>
</evidence>
<evidence type="ECO:0000269" key="4">
    <source>
    </source>
</evidence>
<evidence type="ECO:0000305" key="5"/>
<name>JAL6_ARATH</name>
<sequence>MSEKVGAMGGNKGGAFDDGVFDGVKKVIVGKDFNNVTYIKVEYEKDGKFEIREHGTNRGQLKEFSVDYPNEYITAVGGSYDTVFGYGSALIKSLLFKTSYGRTSPILGHTTLLGNPAGKEFMLESKYGGKLLGFHGRSGEALDAIGPHFFAVNSSLKHFKPQGGNGGSAWDDGAFDGVRKVLVGRNGKFVSYVRFEYAKGERMVPHAHGKRQEAPQEFVVDYPNEHITSVEGTIDGYLSSLKFTTSKGRTSPVFGNVVGSKFVFEETSFKLVGFCGRSGEAIDALGAHFAPLPAPTPAPAPAPAPAPAPAPSPAPASAPVPAPAPTPAPAPAPPNKVEALGGNGGTIFDDGAFDHVRKVYIGQGDSGVAYVKFEYRKDGKRETREHGKMTVLGTEEFEVESDDYITSIEVSVDNVFGFKSEIVTSLVFKTFKGITSQPFGMETEKKLELKDGKGGKLVGFHGKASDVLYALGAYFAPTTNSTTPSTPSTSKKLQARGGNGGASWDDGVFDGVRKILVGQGNDGVAFVTFEYNKGSQAILGDRHGKQTLLGTETFELDYPSEYITSVEGYYDKIFGVEAEVVTSLTFKTNKRTSQPFGMTAGEHFELNEDGYKIVGFHGKAGDLVHQIGVHAVPIFTNYRCVF</sequence>
<accession>Q9SAV1</accession>
<accession>O23831</accession>
<accession>Q56Z10</accession>
<accession>Q9SSV0</accession>
<accession>Q9SXH0</accession>
<dbReference type="EMBL" id="D85194">
    <property type="protein sequence ID" value="BAA22099.1"/>
    <property type="molecule type" value="mRNA"/>
</dbReference>
<dbReference type="EMBL" id="AB027252">
    <property type="protein sequence ID" value="BAA82151.1"/>
    <property type="status" value="ALT_INIT"/>
    <property type="molecule type" value="Genomic_RNA"/>
</dbReference>
<dbReference type="EMBL" id="AB032412">
    <property type="protein sequence ID" value="BAA84545.1"/>
    <property type="status" value="ALT_SEQ"/>
    <property type="molecule type" value="Genomic_DNA"/>
</dbReference>
<dbReference type="EMBL" id="AC006216">
    <property type="protein sequence ID" value="AAD12677.1"/>
    <property type="molecule type" value="Genomic_DNA"/>
</dbReference>
<dbReference type="EMBL" id="CP002684">
    <property type="protein sequence ID" value="AEE32747.1"/>
    <property type="molecule type" value="Genomic_DNA"/>
</dbReference>
<dbReference type="EMBL" id="CP002684">
    <property type="protein sequence ID" value="AEE32748.1"/>
    <property type="molecule type" value="Genomic_DNA"/>
</dbReference>
<dbReference type="EMBL" id="AY039537">
    <property type="protein sequence ID" value="AAK62593.1"/>
    <property type="molecule type" value="mRNA"/>
</dbReference>
<dbReference type="EMBL" id="BT002280">
    <property type="protein sequence ID" value="AAN72291.1"/>
    <property type="molecule type" value="mRNA"/>
</dbReference>
<dbReference type="EMBL" id="AK221159">
    <property type="protein sequence ID" value="BAD95192.1"/>
    <property type="status" value="ALT_INIT"/>
    <property type="molecule type" value="mRNA"/>
</dbReference>
<dbReference type="PIR" id="A96560">
    <property type="entry name" value="A96560"/>
</dbReference>
<dbReference type="RefSeq" id="NP_175615.1">
    <property type="nucleotide sequence ID" value="NM_104084.4"/>
</dbReference>
<dbReference type="RefSeq" id="NP_849794.1">
    <property type="nucleotide sequence ID" value="NM_179463.3"/>
</dbReference>
<dbReference type="SMR" id="Q9SAV1"/>
<dbReference type="BioGRID" id="26857">
    <property type="interactions" value="1"/>
</dbReference>
<dbReference type="FunCoup" id="Q9SAV1">
    <property type="interactions" value="7"/>
</dbReference>
<dbReference type="STRING" id="3702.Q9SAV1"/>
<dbReference type="GlyGen" id="Q9SAV1">
    <property type="glycosylation" value="3 sites"/>
</dbReference>
<dbReference type="PaxDb" id="3702-AT1G52030.2"/>
<dbReference type="ProteomicsDB" id="232293"/>
<dbReference type="EnsemblPlants" id="AT1G52030.1">
    <property type="protein sequence ID" value="AT1G52030.1"/>
    <property type="gene ID" value="AT1G52030"/>
</dbReference>
<dbReference type="EnsemblPlants" id="AT1G52030.2">
    <property type="protein sequence ID" value="AT1G52030.2"/>
    <property type="gene ID" value="AT1G52030"/>
</dbReference>
<dbReference type="GeneID" id="841632"/>
<dbReference type="Gramene" id="AT1G52030.1">
    <property type="protein sequence ID" value="AT1G52030.1"/>
    <property type="gene ID" value="AT1G52030"/>
</dbReference>
<dbReference type="Gramene" id="AT1G52030.2">
    <property type="protein sequence ID" value="AT1G52030.2"/>
    <property type="gene ID" value="AT1G52030"/>
</dbReference>
<dbReference type="KEGG" id="ath:AT1G52030"/>
<dbReference type="Araport" id="AT1G52030"/>
<dbReference type="TAIR" id="AT1G52030">
    <property type="gene designation" value="MBP2"/>
</dbReference>
<dbReference type="eggNOG" id="ENOG502SCUZ">
    <property type="taxonomic scope" value="Eukaryota"/>
</dbReference>
<dbReference type="HOGENOM" id="CLU_019384_2_1_1"/>
<dbReference type="InParanoid" id="Q9SAV1"/>
<dbReference type="OMA" id="RGWMAST"/>
<dbReference type="PhylomeDB" id="Q9SAV1"/>
<dbReference type="PRO" id="PR:Q9SAV1"/>
<dbReference type="Proteomes" id="UP000006548">
    <property type="component" value="Chromosome 1"/>
</dbReference>
<dbReference type="ExpressionAtlas" id="Q9SAV1">
    <property type="expression patterns" value="baseline and differential"/>
</dbReference>
<dbReference type="GO" id="GO:0010169">
    <property type="term" value="C:thioglucosidase complex"/>
    <property type="evidence" value="ECO:0000250"/>
    <property type="project" value="TAIR"/>
</dbReference>
<dbReference type="GO" id="GO:0030246">
    <property type="term" value="F:carbohydrate binding"/>
    <property type="evidence" value="ECO:0000304"/>
    <property type="project" value="TAIR"/>
</dbReference>
<dbReference type="GO" id="GO:0010180">
    <property type="term" value="F:thioglucosidase binding"/>
    <property type="evidence" value="ECO:0000250"/>
    <property type="project" value="TAIR"/>
</dbReference>
<dbReference type="GO" id="GO:0007155">
    <property type="term" value="P:cell adhesion"/>
    <property type="evidence" value="ECO:0000304"/>
    <property type="project" value="TAIR"/>
</dbReference>
<dbReference type="GO" id="GO:0006952">
    <property type="term" value="P:defense response"/>
    <property type="evidence" value="ECO:0000304"/>
    <property type="project" value="TAIR"/>
</dbReference>
<dbReference type="GO" id="GO:0009908">
    <property type="term" value="P:flower development"/>
    <property type="evidence" value="ECO:0000304"/>
    <property type="project" value="TAIR"/>
</dbReference>
<dbReference type="GO" id="GO:0009611">
    <property type="term" value="P:response to wounding"/>
    <property type="evidence" value="ECO:0000270"/>
    <property type="project" value="TAIR"/>
</dbReference>
<dbReference type="CDD" id="cd09612">
    <property type="entry name" value="Jacalin"/>
    <property type="match status" value="4"/>
</dbReference>
<dbReference type="FunFam" id="2.100.10.30:FF:000001">
    <property type="entry name" value="Jacalin-related lectin 33"/>
    <property type="match status" value="4"/>
</dbReference>
<dbReference type="Gene3D" id="2.100.10.30">
    <property type="entry name" value="Jacalin-like lectin domain"/>
    <property type="match status" value="4"/>
</dbReference>
<dbReference type="InterPro" id="IPR001229">
    <property type="entry name" value="Jacalin-like_lectin_dom"/>
</dbReference>
<dbReference type="InterPro" id="IPR033734">
    <property type="entry name" value="Jacalin-like_lectin_dom_plant"/>
</dbReference>
<dbReference type="InterPro" id="IPR036404">
    <property type="entry name" value="Jacalin-like_lectin_dom_sf"/>
</dbReference>
<dbReference type="PANTHER" id="PTHR47293">
    <property type="entry name" value="JACALIN-RELATED LECTIN 3"/>
    <property type="match status" value="1"/>
</dbReference>
<dbReference type="PANTHER" id="PTHR47293:SF75">
    <property type="entry name" value="MYROSINASE-BINDING PROTEIN 2"/>
    <property type="match status" value="1"/>
</dbReference>
<dbReference type="Pfam" id="PF01419">
    <property type="entry name" value="Jacalin"/>
    <property type="match status" value="4"/>
</dbReference>
<dbReference type="SMART" id="SM00915">
    <property type="entry name" value="Jacalin"/>
    <property type="match status" value="4"/>
</dbReference>
<dbReference type="SUPFAM" id="SSF51101">
    <property type="entry name" value="Mannose-binding lectins"/>
    <property type="match status" value="4"/>
</dbReference>
<dbReference type="PROSITE" id="PS51752">
    <property type="entry name" value="JACALIN_LECTIN"/>
    <property type="match status" value="4"/>
</dbReference>
<keyword id="KW-0430">Lectin</keyword>
<keyword id="KW-1185">Reference proteome</keyword>
<keyword id="KW-0677">Repeat</keyword>
<proteinExistence type="evidence at transcript level"/>
<feature type="chain" id="PRO_0000072790" description="Myrosinase-binding protein 2">
    <location>
        <begin position="1"/>
        <end position="642"/>
    </location>
</feature>
<feature type="domain" description="Jacalin-type lectin 1" evidence="1">
    <location>
        <begin position="2"/>
        <end position="151"/>
    </location>
</feature>
<feature type="domain" description="Jacalin-type lectin 2" evidence="1">
    <location>
        <begin position="156"/>
        <end position="291"/>
    </location>
</feature>
<feature type="domain" description="Jacalin-type lectin 3" evidence="1">
    <location>
        <begin position="334"/>
        <end position="477"/>
    </location>
</feature>
<feature type="domain" description="Jacalin-type lectin 4" evidence="1">
    <location>
        <begin position="490"/>
        <end position="633"/>
    </location>
</feature>
<feature type="region of interest" description="Disordered" evidence="2">
    <location>
        <begin position="296"/>
        <end position="338"/>
    </location>
</feature>
<feature type="region of interest" description="Disordered" evidence="2">
    <location>
        <begin position="479"/>
        <end position="499"/>
    </location>
</feature>
<feature type="compositionally biased region" description="Pro residues" evidence="2">
    <location>
        <begin position="296"/>
        <end position="334"/>
    </location>
</feature>
<feature type="compositionally biased region" description="Low complexity" evidence="2">
    <location>
        <begin position="479"/>
        <end position="490"/>
    </location>
</feature>
<feature type="sequence conflict" description="In Ref. 1; BAA22099." evidence="5" ref="1">
    <original>F</original>
    <variation>L</variation>
    <location>
        <position position="21"/>
    </location>
</feature>
<feature type="sequence conflict" description="In Ref. 1; BAA22099." evidence="5" ref="1">
    <original>A</original>
    <variation>T</variation>
    <location>
        <position position="89"/>
    </location>
</feature>
<feature type="sequence conflict" description="In Ref. 1; BAA22099." evidence="5" ref="1">
    <original>A</original>
    <variation>G</variation>
    <location>
        <position position="290"/>
    </location>
</feature>
<organism>
    <name type="scientific">Arabidopsis thaliana</name>
    <name type="common">Mouse-ear cress</name>
    <dbReference type="NCBI Taxonomy" id="3702"/>
    <lineage>
        <taxon>Eukaryota</taxon>
        <taxon>Viridiplantae</taxon>
        <taxon>Streptophyta</taxon>
        <taxon>Embryophyta</taxon>
        <taxon>Tracheophyta</taxon>
        <taxon>Spermatophyta</taxon>
        <taxon>Magnoliopsida</taxon>
        <taxon>eudicotyledons</taxon>
        <taxon>Gunneridae</taxon>
        <taxon>Pentapetalae</taxon>
        <taxon>rosids</taxon>
        <taxon>malvids</taxon>
        <taxon>Brassicales</taxon>
        <taxon>Brassicaceae</taxon>
        <taxon>Camelineae</taxon>
        <taxon>Arabidopsis</taxon>
    </lineage>
</organism>
<reference key="1">
    <citation type="journal article" date="1996" name="Plant Mol. Biol.">
        <title>Isolation and characterization of cDNA clones corresponding to the genes expressed preferentially in floral organs of Arabidopsis thaliana.</title>
        <authorList>
            <person name="Utsugi S."/>
            <person name="Sakamoto W."/>
            <person name="Ogura Y."/>
            <person name="Murata M."/>
            <person name="Motoyoshi F."/>
        </authorList>
    </citation>
    <scope>NUCLEOTIDE SEQUENCE [MRNA]</scope>
    <source>
        <strain>cv. Columbia</strain>
        <tissue>Flower bud</tissue>
    </source>
</reference>
<reference key="2">
    <citation type="journal article" date="1999" name="Plant Cell Physiol.">
        <title>Characterization of a flower-specific gene encoding a putative myrosinase binding protein in Arabidopsis thaliana.</title>
        <authorList>
            <person name="Takechi K."/>
            <person name="Sakamoto W."/>
            <person name="Utsugi S."/>
            <person name="Murata M."/>
            <person name="Motoyoshi F."/>
        </authorList>
    </citation>
    <scope>NUCLEOTIDE SEQUENCE [GENOMIC DNA]</scope>
    <scope>TISSUE SPECIFICITY</scope>
    <scope>INDUCTION</scope>
    <source>
        <strain>cv. Columbia</strain>
    </source>
</reference>
<reference key="3">
    <citation type="journal article" date="2000" name="Nature">
        <title>Sequence and analysis of chromosome 1 of the plant Arabidopsis thaliana.</title>
        <authorList>
            <person name="Theologis A."/>
            <person name="Ecker J.R."/>
            <person name="Palm C.J."/>
            <person name="Federspiel N.A."/>
            <person name="Kaul S."/>
            <person name="White O."/>
            <person name="Alonso J."/>
            <person name="Altafi H."/>
            <person name="Araujo R."/>
            <person name="Bowman C.L."/>
            <person name="Brooks S.Y."/>
            <person name="Buehler E."/>
            <person name="Chan A."/>
            <person name="Chao Q."/>
            <person name="Chen H."/>
            <person name="Cheuk R.F."/>
            <person name="Chin C.W."/>
            <person name="Chung M.K."/>
            <person name="Conn L."/>
            <person name="Conway A.B."/>
            <person name="Conway A.R."/>
            <person name="Creasy T.H."/>
            <person name="Dewar K."/>
            <person name="Dunn P."/>
            <person name="Etgu P."/>
            <person name="Feldblyum T.V."/>
            <person name="Feng J.-D."/>
            <person name="Fong B."/>
            <person name="Fujii C.Y."/>
            <person name="Gill J.E."/>
            <person name="Goldsmith A.D."/>
            <person name="Haas B."/>
            <person name="Hansen N.F."/>
            <person name="Hughes B."/>
            <person name="Huizar L."/>
            <person name="Hunter J.L."/>
            <person name="Jenkins J."/>
            <person name="Johnson-Hopson C."/>
            <person name="Khan S."/>
            <person name="Khaykin E."/>
            <person name="Kim C.J."/>
            <person name="Koo H.L."/>
            <person name="Kremenetskaia I."/>
            <person name="Kurtz D.B."/>
            <person name="Kwan A."/>
            <person name="Lam B."/>
            <person name="Langin-Hooper S."/>
            <person name="Lee A."/>
            <person name="Lee J.M."/>
            <person name="Lenz C.A."/>
            <person name="Li J.H."/>
            <person name="Li Y.-P."/>
            <person name="Lin X."/>
            <person name="Liu S.X."/>
            <person name="Liu Z.A."/>
            <person name="Luros J.S."/>
            <person name="Maiti R."/>
            <person name="Marziali A."/>
            <person name="Militscher J."/>
            <person name="Miranda M."/>
            <person name="Nguyen M."/>
            <person name="Nierman W.C."/>
            <person name="Osborne B.I."/>
            <person name="Pai G."/>
            <person name="Peterson J."/>
            <person name="Pham P.K."/>
            <person name="Rizzo M."/>
            <person name="Rooney T."/>
            <person name="Rowley D."/>
            <person name="Sakano H."/>
            <person name="Salzberg S.L."/>
            <person name="Schwartz J.R."/>
            <person name="Shinn P."/>
            <person name="Southwick A.M."/>
            <person name="Sun H."/>
            <person name="Tallon L.J."/>
            <person name="Tambunga G."/>
            <person name="Toriumi M.J."/>
            <person name="Town C.D."/>
            <person name="Utterback T."/>
            <person name="Van Aken S."/>
            <person name="Vaysberg M."/>
            <person name="Vysotskaia V.S."/>
            <person name="Walker M."/>
            <person name="Wu D."/>
            <person name="Yu G."/>
            <person name="Fraser C.M."/>
            <person name="Venter J.C."/>
            <person name="Davis R.W."/>
        </authorList>
    </citation>
    <scope>NUCLEOTIDE SEQUENCE [LARGE SCALE GENOMIC DNA]</scope>
    <source>
        <strain>cv. Columbia</strain>
    </source>
</reference>
<reference key="4">
    <citation type="journal article" date="2017" name="Plant J.">
        <title>Araport11: a complete reannotation of the Arabidopsis thaliana reference genome.</title>
        <authorList>
            <person name="Cheng C.Y."/>
            <person name="Krishnakumar V."/>
            <person name="Chan A.P."/>
            <person name="Thibaud-Nissen F."/>
            <person name="Schobel S."/>
            <person name="Town C.D."/>
        </authorList>
    </citation>
    <scope>GENOME REANNOTATION</scope>
    <source>
        <strain>cv. Columbia</strain>
    </source>
</reference>
<reference key="5">
    <citation type="journal article" date="2003" name="Science">
        <title>Empirical analysis of transcriptional activity in the Arabidopsis genome.</title>
        <authorList>
            <person name="Yamada K."/>
            <person name="Lim J."/>
            <person name="Dale J.M."/>
            <person name="Chen H."/>
            <person name="Shinn P."/>
            <person name="Palm C.J."/>
            <person name="Southwick A.M."/>
            <person name="Wu H.C."/>
            <person name="Kim C.J."/>
            <person name="Nguyen M."/>
            <person name="Pham P.K."/>
            <person name="Cheuk R.F."/>
            <person name="Karlin-Newmann G."/>
            <person name="Liu S.X."/>
            <person name="Lam B."/>
            <person name="Sakano H."/>
            <person name="Wu T."/>
            <person name="Yu G."/>
            <person name="Miranda M."/>
            <person name="Quach H.L."/>
            <person name="Tripp M."/>
            <person name="Chang C.H."/>
            <person name="Lee J.M."/>
            <person name="Toriumi M.J."/>
            <person name="Chan M.M."/>
            <person name="Tang C.C."/>
            <person name="Onodera C.S."/>
            <person name="Deng J.M."/>
            <person name="Akiyama K."/>
            <person name="Ansari Y."/>
            <person name="Arakawa T."/>
            <person name="Banh J."/>
            <person name="Banno F."/>
            <person name="Bowser L."/>
            <person name="Brooks S.Y."/>
            <person name="Carninci P."/>
            <person name="Chao Q."/>
            <person name="Choy N."/>
            <person name="Enju A."/>
            <person name="Goldsmith A.D."/>
            <person name="Gurjal M."/>
            <person name="Hansen N.F."/>
            <person name="Hayashizaki Y."/>
            <person name="Johnson-Hopson C."/>
            <person name="Hsuan V.W."/>
            <person name="Iida K."/>
            <person name="Karnes M."/>
            <person name="Khan S."/>
            <person name="Koesema E."/>
            <person name="Ishida J."/>
            <person name="Jiang P.X."/>
            <person name="Jones T."/>
            <person name="Kawai J."/>
            <person name="Kamiya A."/>
            <person name="Meyers C."/>
            <person name="Nakajima M."/>
            <person name="Narusaka M."/>
            <person name="Seki M."/>
            <person name="Sakurai T."/>
            <person name="Satou M."/>
            <person name="Tamse R."/>
            <person name="Vaysberg M."/>
            <person name="Wallender E.K."/>
            <person name="Wong C."/>
            <person name="Yamamura Y."/>
            <person name="Yuan S."/>
            <person name="Shinozaki K."/>
            <person name="Davis R.W."/>
            <person name="Theologis A."/>
            <person name="Ecker J.R."/>
        </authorList>
    </citation>
    <scope>NUCLEOTIDE SEQUENCE [LARGE SCALE MRNA]</scope>
    <source>
        <strain>cv. Columbia</strain>
    </source>
</reference>
<reference key="6">
    <citation type="submission" date="2005-03" db="EMBL/GenBank/DDBJ databases">
        <title>Large-scale analysis of RIKEN Arabidopsis full-length (RAFL) cDNAs.</title>
        <authorList>
            <person name="Totoki Y."/>
            <person name="Seki M."/>
            <person name="Ishida J."/>
            <person name="Nakajima M."/>
            <person name="Enju A."/>
            <person name="Kamiya A."/>
            <person name="Narusaka M."/>
            <person name="Shin-i T."/>
            <person name="Nakagawa M."/>
            <person name="Sakamoto N."/>
            <person name="Oishi K."/>
            <person name="Kohara Y."/>
            <person name="Kobayashi M."/>
            <person name="Toyoda A."/>
            <person name="Sakaki Y."/>
            <person name="Sakurai T."/>
            <person name="Iida K."/>
            <person name="Akiyama K."/>
            <person name="Satou M."/>
            <person name="Toyoda T."/>
            <person name="Konagaya A."/>
            <person name="Carninci P."/>
            <person name="Kawai J."/>
            <person name="Hayashizaki Y."/>
            <person name="Shinozaki K."/>
        </authorList>
    </citation>
    <scope>NUCLEOTIDE SEQUENCE [LARGE SCALE MRNA] OF 418-642</scope>
    <source>
        <strain>cv. Columbia</strain>
    </source>
</reference>
<reference key="7">
    <citation type="journal article" date="2001" name="Planta">
        <title>COI1 affects myrosinase activity and controls the expression of two flower-specific myrosinase-binding protein homologues in Arabidopsis.</title>
        <authorList>
            <person name="Capella A.N."/>
            <person name="Menossi M."/>
            <person name="Arruda P."/>
            <person name="Benedetti C.E."/>
        </authorList>
    </citation>
    <scope>INDUCTION BY METHYL JASMONATE</scope>
    <scope>TISSUE SPECIFICITY</scope>
    <source>
        <strain>cv. Columbia</strain>
    </source>
</reference>
<reference key="8">
    <citation type="journal article" date="2008" name="Plant Cell Physiol.">
        <title>Antagonistic jacalin-related lectins regulate the size of ER body-type beta-glucosidase complexes in Arabidopsis thaliana.</title>
        <authorList>
            <person name="Nagano A.J."/>
            <person name="Fukao Y."/>
            <person name="Fujiwara M."/>
            <person name="Nishimura M."/>
            <person name="Hara-Nishimura I."/>
        </authorList>
    </citation>
    <scope>GENE FAMILY</scope>
    <scope>NOMENCLATURE</scope>
</reference>
<protein>
    <recommendedName>
        <fullName>Myrosinase-binding protein 2</fullName>
    </recommendedName>
    <alternativeName>
        <fullName>Jacalin-related lectin 6</fullName>
    </alternativeName>
    <alternativeName>
        <fullName>Myrosinase-binding protein-like At1g52030</fullName>
        <shortName>MBP</shortName>
    </alternativeName>
</protein>
<gene>
    <name type="primary">F-ATMBP</name>
    <name type="synonym">JAL6</name>
    <name type="synonym">MBP2</name>
    <name type="ordered locus">At1g52030</name>
    <name type="ORF">F5F19.9</name>
</gene>
<comment type="tissue specificity">
    <text evidence="3 4">Expressed in flowers. Detected mainly in ovules and styles of immature flowers, but also in pistils, styles, stamens, petals and embryos. Not detected in leaves.</text>
</comment>
<comment type="induction">
    <text evidence="3 4">Not regulated by wounding, dehydration stress, methyl jasmonate, salicylic acid or abscisic acid treatments.</text>
</comment>
<comment type="similarity">
    <text evidence="1 5">Belongs to the jacalin lectin family.</text>
</comment>
<comment type="sequence caution" evidence="5">
    <conflict type="erroneous initiation">
        <sequence resource="EMBL-CDS" id="BAA82151"/>
    </conflict>
    <text>Extended N-terminus.</text>
</comment>
<comment type="sequence caution" evidence="5">
    <conflict type="erroneous gene model prediction">
        <sequence resource="EMBL-CDS" id="BAA84545"/>
    </conflict>
</comment>
<comment type="sequence caution" evidence="5">
    <conflict type="erroneous initiation">
        <sequence resource="EMBL-CDS" id="BAD95192"/>
    </conflict>
    <text>Truncated N-terminus.</text>
</comment>